<evidence type="ECO:0000255" key="1"/>
<evidence type="ECO:0000255" key="2">
    <source>
        <dbReference type="PROSITE-ProRule" id="PRU00339"/>
    </source>
</evidence>
<evidence type="ECO:0000256" key="3">
    <source>
        <dbReference type="SAM" id="MobiDB-lite"/>
    </source>
</evidence>
<evidence type="ECO:0000269" key="4">
    <source>
    </source>
</evidence>
<evidence type="ECO:0000303" key="5">
    <source>
    </source>
</evidence>
<evidence type="ECO:0000305" key="6"/>
<evidence type="ECO:0000305" key="7">
    <source>
    </source>
</evidence>
<evidence type="ECO:0000312" key="8">
    <source>
        <dbReference type="EMBL" id="EDO77470.1"/>
    </source>
</evidence>
<evidence type="ECO:0000312" key="9">
    <source>
        <dbReference type="EMBL" id="KAE8304741.1"/>
    </source>
</evidence>
<evidence type="ECO:0000312" key="10">
    <source>
        <dbReference type="Proteomes" id="UP000001548"/>
    </source>
</evidence>
<feature type="chain" id="PRO_0000459307" description="Intraflagellar transport protein 56">
    <location>
        <begin position="1"/>
        <end position="529"/>
    </location>
</feature>
<feature type="repeat" description="TPR 1" evidence="1">
    <location>
        <begin position="57"/>
        <end position="90"/>
    </location>
</feature>
<feature type="repeat" description="TPR 2" evidence="2">
    <location>
        <begin position="154"/>
        <end position="187"/>
    </location>
</feature>
<feature type="repeat" description="TPR 3" evidence="1">
    <location>
        <begin position="189"/>
        <end position="221"/>
    </location>
</feature>
<feature type="repeat" description="TPR 4" evidence="1">
    <location>
        <begin position="285"/>
        <end position="321"/>
    </location>
</feature>
<feature type="repeat" description="TPR 5" evidence="1 2">
    <location>
        <begin position="359"/>
        <end position="392"/>
    </location>
</feature>
<feature type="repeat" description="TPR 6" evidence="1">
    <location>
        <begin position="428"/>
        <end position="461"/>
    </location>
</feature>
<feature type="region of interest" description="Disordered" evidence="3">
    <location>
        <begin position="1"/>
        <end position="21"/>
    </location>
</feature>
<feature type="compositionally biased region" description="Basic and acidic residues" evidence="3">
    <location>
        <begin position="11"/>
        <end position="21"/>
    </location>
</feature>
<dbReference type="EMBL" id="AACB02000039">
    <property type="protein sequence ID" value="EDO77470.1"/>
    <property type="molecule type" value="Genomic_DNA"/>
</dbReference>
<dbReference type="EMBL" id="AACB03000001">
    <property type="protein sequence ID" value="KAE8304741.1"/>
    <property type="molecule type" value="Genomic_DNA"/>
</dbReference>
<dbReference type="RefSeq" id="XP_001705144.1">
    <property type="nucleotide sequence ID" value="XM_001705092.1"/>
</dbReference>
<dbReference type="SMR" id="A8BS40"/>
<dbReference type="STRING" id="184922.A8BS40"/>
<dbReference type="EnsemblProtists" id="EDO77470">
    <property type="protein sequence ID" value="EDO77470"/>
    <property type="gene ID" value="GL50803_16375"/>
</dbReference>
<dbReference type="GeneID" id="5698040"/>
<dbReference type="KEGG" id="gla:GL50803_0016375"/>
<dbReference type="VEuPathDB" id="GiardiaDB:GL50803_16375"/>
<dbReference type="HOGENOM" id="CLU_036306_2_0_1"/>
<dbReference type="OMA" id="FIIRRDY"/>
<dbReference type="Proteomes" id="UP000001548">
    <property type="component" value="Chromosome 5"/>
</dbReference>
<dbReference type="GO" id="GO:0097729">
    <property type="term" value="C:9+2 motile cilium"/>
    <property type="evidence" value="ECO:0000314"/>
    <property type="project" value="UniProtKB"/>
</dbReference>
<dbReference type="GO" id="GO:0005930">
    <property type="term" value="C:axoneme"/>
    <property type="evidence" value="ECO:0000314"/>
    <property type="project" value="UniProtKB"/>
</dbReference>
<dbReference type="GO" id="GO:0036064">
    <property type="term" value="C:ciliary basal body"/>
    <property type="evidence" value="ECO:0000314"/>
    <property type="project" value="UniProtKB"/>
</dbReference>
<dbReference type="GO" id="GO:0097546">
    <property type="term" value="C:ciliary base"/>
    <property type="evidence" value="ECO:0000318"/>
    <property type="project" value="GO_Central"/>
</dbReference>
<dbReference type="GO" id="GO:1990900">
    <property type="term" value="C:ciliary pocket collar"/>
    <property type="evidence" value="ECO:0000314"/>
    <property type="project" value="UniProtKB"/>
</dbReference>
<dbReference type="GO" id="GO:0097542">
    <property type="term" value="C:ciliary tip"/>
    <property type="evidence" value="ECO:0000314"/>
    <property type="project" value="UniProtKB"/>
</dbReference>
<dbReference type="GO" id="GO:0030992">
    <property type="term" value="C:intraciliary transport particle B"/>
    <property type="evidence" value="ECO:0000318"/>
    <property type="project" value="GO_Central"/>
</dbReference>
<dbReference type="GO" id="GO:0120170">
    <property type="term" value="F:intraciliary transport particle B binding"/>
    <property type="evidence" value="ECO:0000318"/>
    <property type="project" value="GO_Central"/>
</dbReference>
<dbReference type="GO" id="GO:0035720">
    <property type="term" value="P:intraciliary anterograde transport"/>
    <property type="evidence" value="ECO:0000318"/>
    <property type="project" value="GO_Central"/>
</dbReference>
<dbReference type="GO" id="GO:0035735">
    <property type="term" value="P:intraciliary transport involved in cilium assembly"/>
    <property type="evidence" value="ECO:0000318"/>
    <property type="project" value="GO_Central"/>
</dbReference>
<dbReference type="Gene3D" id="1.25.40.10">
    <property type="entry name" value="Tetratricopeptide repeat domain"/>
    <property type="match status" value="2"/>
</dbReference>
<dbReference type="InterPro" id="IPR011990">
    <property type="entry name" value="TPR-like_helical_dom_sf"/>
</dbReference>
<dbReference type="InterPro" id="IPR019734">
    <property type="entry name" value="TPR_rpt"/>
</dbReference>
<dbReference type="InterPro" id="IPR030511">
    <property type="entry name" value="TTC26"/>
</dbReference>
<dbReference type="PANTHER" id="PTHR14781">
    <property type="entry name" value="INTRAFLAGELLAR TRANSPORT PROTEIN 56"/>
    <property type="match status" value="1"/>
</dbReference>
<dbReference type="PANTHER" id="PTHR14781:SF0">
    <property type="entry name" value="INTRAFLAGELLAR TRANSPORT PROTEIN 56"/>
    <property type="match status" value="1"/>
</dbReference>
<dbReference type="Pfam" id="PF12895">
    <property type="entry name" value="ANAPC3"/>
    <property type="match status" value="1"/>
</dbReference>
<dbReference type="Pfam" id="PF13432">
    <property type="entry name" value="TPR_16"/>
    <property type="match status" value="1"/>
</dbReference>
<dbReference type="SMART" id="SM00028">
    <property type="entry name" value="TPR"/>
    <property type="match status" value="3"/>
</dbReference>
<dbReference type="SUPFAM" id="SSF48452">
    <property type="entry name" value="TPR-like"/>
    <property type="match status" value="3"/>
</dbReference>
<dbReference type="PROSITE" id="PS50005">
    <property type="entry name" value="TPR"/>
    <property type="match status" value="1"/>
</dbReference>
<sequence length="529" mass="60110">MLHNRMTTAFERSKEQEHEAAKNEIPSFQVFIERRDFLGAITVLKFLKSTRNTAEVGNADLWIAYCNFHLGRHEEALEIYTALKKSKNPPLDAHTLDLYRAICMLYLGQMGDARELATTLPPTPLSNRLLFHACSRLLDEESLVTYHTKLRNVSADQMALAAVHFLRTHYQQALECYEEVLQVQPECFAIYMHMALCYYKLGDYLKSEEFLMLYRENAEDSLTSLNLYAATKFRQGKMAEALKILEELQNDETIVGLPIFKHNKCLYTEMNAAVHILPPLVGIVSEARQNLVKLYIEKGQYEDAYKVVQSFEPAVSAEYTLKAAAYAYYGQTVQDMAVLQYAQAAYSTVGQSDADRDTVLGRRAMAAAYFLTGEFEEASMYLESIADIPKESEDSFMLNYSLCLAATCKVTEALERLMSVMGSTNFTPVHRTWLGRLLIRAQRSAEAFDLYRDAEKNSLQTILLMKVIANECFAAGEYQYAERAAAILVDLDKASKDHYIMIQKACIAAMELIRRGKTITPPELVYETE</sequence>
<reference evidence="8 10" key="1">
    <citation type="journal article" date="2007" name="Science">
        <title>Genomic minimalism in the early diverging intestinal parasite Giardia lamblia.</title>
        <authorList>
            <person name="Morrison H.G."/>
            <person name="McArthur A.G."/>
            <person name="Gillin F.D."/>
            <person name="Aley S.B."/>
            <person name="Adam R.D."/>
            <person name="Olsen G.J."/>
            <person name="Best A.A."/>
            <person name="Cande W.Z."/>
            <person name="Chen F."/>
            <person name="Cipriano M.J."/>
            <person name="Davids B.J."/>
            <person name="Dawson S.C."/>
            <person name="Elmendorf H.G."/>
            <person name="Hehl A.B."/>
            <person name="Holder M.E."/>
            <person name="Huse S.M."/>
            <person name="Kim U.U."/>
            <person name="Lasek-Nesselquist E."/>
            <person name="Manning G."/>
            <person name="Nigam A."/>
            <person name="Nixon J.E.J."/>
            <person name="Palm D."/>
            <person name="Passamaneck N.E."/>
            <person name="Prabhu A."/>
            <person name="Reich C.I."/>
            <person name="Reiner D.S."/>
            <person name="Samuelson J."/>
            <person name="Svard S.G."/>
            <person name="Sogin M.L."/>
        </authorList>
    </citation>
    <scope>NUCLEOTIDE SEQUENCE [LARGE SCALE GENOMIC DNA]</scope>
    <source>
        <strain evidence="10">ATCC 50803 / WB clone C6</strain>
    </source>
</reference>
<reference evidence="9" key="2">
    <citation type="submission" date="2019-07" db="EMBL/GenBank/DDBJ databases">
        <title>New Giardia intestinalis WB genome in near-complete chromosomes.</title>
        <authorList>
            <person name="Xu F."/>
            <person name="Jex A."/>
            <person name="Svard S.G."/>
        </authorList>
    </citation>
    <scope>NUCLEOTIDE SEQUENCE [LARGE SCALE GENOMIC DNA]</scope>
    <source>
        <strain evidence="9">ATCC 50803 / WB clone C6</strain>
    </source>
</reference>
<reference key="3">
    <citation type="journal article" date="2019" name="Elife">
        <title>Length-dependent disassembly maintains four different flagellar lengths in Giardia.</title>
        <authorList>
            <person name="McInally S.G."/>
            <person name="Kondev J."/>
            <person name="Dawson S.C."/>
        </authorList>
    </citation>
    <scope>FUNCTION</scope>
    <scope>SUBCELLULAR LOCATION</scope>
    <source>
        <strain evidence="5">ATCC 50803 / WB clone C6</strain>
    </source>
</reference>
<gene>
    <name evidence="9" type="ORF">GL50803_0016375</name>
    <name evidence="8" type="ORF">GL50803_16375</name>
</gene>
<proteinExistence type="inferred from homology"/>
<comment type="function">
    <text evidence="7">Component of the intraflagellar transport complex B (IFT-B) involved in flagellar assembly (Probable).</text>
</comment>
<comment type="subcellular location">
    <subcellularLocation>
        <location evidence="4">Cell projection</location>
        <location evidence="4">Cilium</location>
        <location evidence="4">Flagellum</location>
    </subcellularLocation>
    <subcellularLocation>
        <location evidence="4">Cytoplasm</location>
        <location evidence="4">Cytoskeleton</location>
        <location evidence="4">Flagellum axoneme</location>
    </subcellularLocation>
    <subcellularLocation>
        <location evidence="4">Cytoplasm</location>
        <location evidence="4">Cytoskeleton</location>
        <location evidence="4">Flagellum basal body</location>
    </subcellularLocation>
    <text evidence="4">Localizes to the cytoplasmic and membrane-bound portions of each of the eight axonemes, localizing particularly at the flagellar pores and at the distal flagellar tips. Localizes to the basal bodies.</text>
</comment>
<comment type="similarity">
    <text evidence="6">Belongs to the IFT56 family.</text>
</comment>
<name>IFT56_GIAIC</name>
<keyword id="KW-0966">Cell projection</keyword>
<keyword id="KW-0969">Cilium</keyword>
<keyword id="KW-0970">Cilium biogenesis/degradation</keyword>
<keyword id="KW-0963">Cytoplasm</keyword>
<keyword id="KW-0206">Cytoskeleton</keyword>
<keyword id="KW-0282">Flagellum</keyword>
<keyword id="KW-1185">Reference proteome</keyword>
<keyword id="KW-0677">Repeat</keyword>
<keyword id="KW-0802">TPR repeat</keyword>
<protein>
    <recommendedName>
        <fullName evidence="5">Intraflagellar transport protein 56</fullName>
        <shortName evidence="5">IFT56</shortName>
    </recommendedName>
    <alternativeName>
        <fullName evidence="9">Intraflagellar transport protein IFT56</fullName>
    </alternativeName>
</protein>
<organism evidence="8">
    <name type="scientific">Giardia intestinalis (strain ATCC 50803 / WB clone C6)</name>
    <name type="common">Giardia lamblia</name>
    <dbReference type="NCBI Taxonomy" id="184922"/>
    <lineage>
        <taxon>Eukaryota</taxon>
        <taxon>Metamonada</taxon>
        <taxon>Diplomonadida</taxon>
        <taxon>Hexamitidae</taxon>
        <taxon>Giardiinae</taxon>
        <taxon>Giardia</taxon>
    </lineage>
</organism>
<accession>A8BS40</accession>